<name>ECPA_ECOL5</name>
<keyword id="KW-0281">Fimbrium</keyword>
<keyword id="KW-0732">Signal</keyword>
<evidence type="ECO:0000250" key="1"/>
<evidence type="ECO:0000255" key="2"/>
<evidence type="ECO:0000305" key="3"/>
<dbReference type="EMBL" id="CP000247">
    <property type="protein sequence ID" value="ABG68390.1"/>
    <property type="molecule type" value="Genomic_DNA"/>
</dbReference>
<dbReference type="RefSeq" id="WP_000730982.1">
    <property type="nucleotide sequence ID" value="NC_008253.1"/>
</dbReference>
<dbReference type="SMR" id="Q0TKZ1"/>
<dbReference type="KEGG" id="ecp:ECP_0356"/>
<dbReference type="HOGENOM" id="CLU_120328_0_0_6"/>
<dbReference type="Proteomes" id="UP000009182">
    <property type="component" value="Chromosome"/>
</dbReference>
<dbReference type="GO" id="GO:0009289">
    <property type="term" value="C:pilus"/>
    <property type="evidence" value="ECO:0007669"/>
    <property type="project" value="UniProtKB-SubCell"/>
</dbReference>
<dbReference type="Gene3D" id="2.60.40.3290">
    <property type="entry name" value="Fimbrial protein EcpA"/>
    <property type="match status" value="1"/>
</dbReference>
<dbReference type="InterPro" id="IPR016514">
    <property type="entry name" value="EcpA"/>
</dbReference>
<dbReference type="InterPro" id="IPR038478">
    <property type="entry name" value="Fimbrillin_EcpA_sf"/>
</dbReference>
<dbReference type="Pfam" id="PF16449">
    <property type="entry name" value="MatB"/>
    <property type="match status" value="1"/>
</dbReference>
<dbReference type="PIRSF" id="PIRSF007320">
    <property type="entry name" value="Fimbrillin_MatB"/>
    <property type="match status" value="1"/>
</dbReference>
<proteinExistence type="inferred from homology"/>
<reference key="1">
    <citation type="journal article" date="2006" name="Mol. Microbiol.">
        <title>Role of pathogenicity island-associated integrases in the genome plasticity of uropathogenic Escherichia coli strain 536.</title>
        <authorList>
            <person name="Hochhut B."/>
            <person name="Wilde C."/>
            <person name="Balling G."/>
            <person name="Middendorf B."/>
            <person name="Dobrindt U."/>
            <person name="Brzuszkiewicz E."/>
            <person name="Gottschalk G."/>
            <person name="Carniel E."/>
            <person name="Hacker J."/>
        </authorList>
    </citation>
    <scope>NUCLEOTIDE SEQUENCE [LARGE SCALE GENOMIC DNA]</scope>
    <source>
        <strain>536 / UPEC</strain>
    </source>
</reference>
<accession>Q0TKZ1</accession>
<protein>
    <recommendedName>
        <fullName>Common pilus major fimbrillin subunit EcpA</fullName>
    </recommendedName>
    <alternativeName>
        <fullName>MatB fimbrillin</fullName>
    </alternativeName>
</protein>
<gene>
    <name type="primary">ecpA</name>
    <name type="synonym">matB</name>
    <name type="ordered locus">ECP_0356</name>
</gene>
<comment type="function">
    <text evidence="1">Part of the ecpRABCDE operon, which encodes the E.coli common pilus (ECP). ECP is found in both commensal and pathogenic strains and plays a dual role in early-stage biofilm development and host cell recognition. Major subunit of the fimbria (By similarity).</text>
</comment>
<comment type="subunit">
    <text evidence="1">Self-associates. Forms filaments. Interacts with EcpD (By similarity).</text>
</comment>
<comment type="subcellular location">
    <subcellularLocation>
        <location evidence="1">Fimbrium</location>
    </subcellularLocation>
</comment>
<comment type="induction">
    <text evidence="1">Negatively regulated by H-NS. Positively regulated by IHF and EcpR (By similarity).</text>
</comment>
<comment type="similarity">
    <text evidence="3">Belongs to the EcpA/MatB fimbrillin family.</text>
</comment>
<sequence length="195" mass="20081">MKKKVLAIALVTVFTGTGVAQAADVTAQAVATWSATAKKDTTSKLVVTPLGSLAFQYAEGIKGFNSQKGLFDVAIEGDSTATAFKLTSRLITNTLTQLDTSGSTLNVGVDYNGAAVEKTGDTVMIDTANGVLGGNLSPLANGYNASNRTTAQDGFTFSIISGTTNGTTAVTDYSTLPEGIWSGDVSVQFDATWTS</sequence>
<feature type="signal peptide" evidence="2">
    <location>
        <begin position="1"/>
        <end position="22"/>
    </location>
</feature>
<feature type="chain" id="PRO_0000367930" description="Common pilus major fimbrillin subunit EcpA">
    <location>
        <begin position="23"/>
        <end position="195"/>
    </location>
</feature>
<organism>
    <name type="scientific">Escherichia coli O6:K15:H31 (strain 536 / UPEC)</name>
    <dbReference type="NCBI Taxonomy" id="362663"/>
    <lineage>
        <taxon>Bacteria</taxon>
        <taxon>Pseudomonadati</taxon>
        <taxon>Pseudomonadota</taxon>
        <taxon>Gammaproteobacteria</taxon>
        <taxon>Enterobacterales</taxon>
        <taxon>Enterobacteriaceae</taxon>
        <taxon>Escherichia</taxon>
    </lineage>
</organism>